<organism>
    <name type="scientific">Saccharolobus islandicus (strain M.14.25 / Kamchatka #1)</name>
    <name type="common">Sulfolobus islandicus</name>
    <dbReference type="NCBI Taxonomy" id="427317"/>
    <lineage>
        <taxon>Archaea</taxon>
        <taxon>Thermoproteota</taxon>
        <taxon>Thermoprotei</taxon>
        <taxon>Sulfolobales</taxon>
        <taxon>Sulfolobaceae</taxon>
        <taxon>Saccharolobus</taxon>
    </lineage>
</organism>
<reference key="1">
    <citation type="journal article" date="2009" name="Proc. Natl. Acad. Sci. U.S.A.">
        <title>Biogeography of the Sulfolobus islandicus pan-genome.</title>
        <authorList>
            <person name="Reno M.L."/>
            <person name="Held N.L."/>
            <person name="Fields C.J."/>
            <person name="Burke P.V."/>
            <person name="Whitaker R.J."/>
        </authorList>
    </citation>
    <scope>NUCLEOTIDE SEQUENCE [LARGE SCALE GENOMIC DNA]</scope>
    <source>
        <strain>M.14.25 / Kamchatka #1</strain>
    </source>
</reference>
<sequence>MPGNSFGKLFRVTTFGESHGPAVGVVIDGVPAGLPLTVEDIKFELEFRRPGRLYVSGRREKDEPEILSGIFNNRTTGSPIAVIVRNTDVISSFYEEIRYKPRPGHADLPFIMKYGYENWDYRGGGRASARETVGRVIAGAVAKKLLMLADTWIAGHLRSLGPEELNEEVTFEEVLCSKYSPVRASKKVLEEKYEALIKKATQEGDSYGGIAEVITKNPPIGLGEPVFDKMKAELAKAIMSIPAVTGFEYGLGFMVSKMKGSEANDEIIRKDNKIGWKYNYAGGILGGLTNGEDLIVRCAFKPTSSIRKPQKTIDLRNLEETYISVIGRHDPAVAIRGVTVVESMVALTLVDHAMRAGVIPLVKLTEEQGNIVQQRWERYVRSCKPMEESQL</sequence>
<comment type="function">
    <text evidence="1">Catalyzes the anti-1,4-elimination of the C-3 phosphate and the C-6 proR hydrogen from 5-enolpyruvylshikimate-3-phosphate (EPSP) to yield chorismate, which is the branch point compound that serves as the starting substrate for the three terminal pathways of aromatic amino acid biosynthesis. This reaction introduces a second double bond into the aromatic ring system.</text>
</comment>
<comment type="catalytic activity">
    <reaction evidence="1">
        <text>5-O-(1-carboxyvinyl)-3-phosphoshikimate = chorismate + phosphate</text>
        <dbReference type="Rhea" id="RHEA:21020"/>
        <dbReference type="ChEBI" id="CHEBI:29748"/>
        <dbReference type="ChEBI" id="CHEBI:43474"/>
        <dbReference type="ChEBI" id="CHEBI:57701"/>
        <dbReference type="EC" id="4.2.3.5"/>
    </reaction>
</comment>
<comment type="cofactor">
    <cofactor evidence="1">
        <name>FMNH2</name>
        <dbReference type="ChEBI" id="CHEBI:57618"/>
    </cofactor>
    <text evidence="1">Reduced FMN (FMNH(2)).</text>
</comment>
<comment type="pathway">
    <text evidence="1">Metabolic intermediate biosynthesis; chorismate biosynthesis; chorismate from D-erythrose 4-phosphate and phosphoenolpyruvate: step 7/7.</text>
</comment>
<comment type="similarity">
    <text evidence="1">Belongs to the chorismate synthase family.</text>
</comment>
<proteinExistence type="inferred from homology"/>
<gene>
    <name evidence="1" type="primary">aroC</name>
    <name type="ordered locus">M1425_1795</name>
</gene>
<dbReference type="EC" id="4.2.3.5" evidence="1"/>
<dbReference type="EMBL" id="CP001400">
    <property type="protein sequence ID" value="ACP38540.1"/>
    <property type="molecule type" value="Genomic_DNA"/>
</dbReference>
<dbReference type="RefSeq" id="WP_012711770.1">
    <property type="nucleotide sequence ID" value="NC_012588.1"/>
</dbReference>
<dbReference type="SMR" id="C3MXK6"/>
<dbReference type="GeneID" id="84062147"/>
<dbReference type="KEGG" id="sia:M1425_1795"/>
<dbReference type="HOGENOM" id="CLU_034547_0_0_2"/>
<dbReference type="UniPathway" id="UPA00053">
    <property type="reaction ID" value="UER00090"/>
</dbReference>
<dbReference type="Proteomes" id="UP000001350">
    <property type="component" value="Chromosome"/>
</dbReference>
<dbReference type="GO" id="GO:0005829">
    <property type="term" value="C:cytosol"/>
    <property type="evidence" value="ECO:0007669"/>
    <property type="project" value="TreeGrafter"/>
</dbReference>
<dbReference type="GO" id="GO:0004107">
    <property type="term" value="F:chorismate synthase activity"/>
    <property type="evidence" value="ECO:0007669"/>
    <property type="project" value="UniProtKB-UniRule"/>
</dbReference>
<dbReference type="GO" id="GO:0010181">
    <property type="term" value="F:FMN binding"/>
    <property type="evidence" value="ECO:0007669"/>
    <property type="project" value="TreeGrafter"/>
</dbReference>
<dbReference type="GO" id="GO:0008652">
    <property type="term" value="P:amino acid biosynthetic process"/>
    <property type="evidence" value="ECO:0007669"/>
    <property type="project" value="UniProtKB-KW"/>
</dbReference>
<dbReference type="GO" id="GO:0009073">
    <property type="term" value="P:aromatic amino acid family biosynthetic process"/>
    <property type="evidence" value="ECO:0007669"/>
    <property type="project" value="UniProtKB-KW"/>
</dbReference>
<dbReference type="GO" id="GO:0009423">
    <property type="term" value="P:chorismate biosynthetic process"/>
    <property type="evidence" value="ECO:0007669"/>
    <property type="project" value="UniProtKB-UniRule"/>
</dbReference>
<dbReference type="CDD" id="cd07304">
    <property type="entry name" value="Chorismate_synthase"/>
    <property type="match status" value="1"/>
</dbReference>
<dbReference type="FunFam" id="3.60.150.10:FF:000002">
    <property type="entry name" value="Chorismate synthase"/>
    <property type="match status" value="1"/>
</dbReference>
<dbReference type="Gene3D" id="3.60.150.10">
    <property type="entry name" value="Chorismate synthase AroC"/>
    <property type="match status" value="1"/>
</dbReference>
<dbReference type="HAMAP" id="MF_00300">
    <property type="entry name" value="Chorismate_synth"/>
    <property type="match status" value="1"/>
</dbReference>
<dbReference type="InterPro" id="IPR000453">
    <property type="entry name" value="Chorismate_synth"/>
</dbReference>
<dbReference type="InterPro" id="IPR035904">
    <property type="entry name" value="Chorismate_synth_AroC_sf"/>
</dbReference>
<dbReference type="InterPro" id="IPR020541">
    <property type="entry name" value="Chorismate_synthase_CS"/>
</dbReference>
<dbReference type="NCBIfam" id="TIGR00033">
    <property type="entry name" value="aroC"/>
    <property type="match status" value="1"/>
</dbReference>
<dbReference type="NCBIfam" id="NF003793">
    <property type="entry name" value="PRK05382.1"/>
    <property type="match status" value="1"/>
</dbReference>
<dbReference type="PANTHER" id="PTHR21085">
    <property type="entry name" value="CHORISMATE SYNTHASE"/>
    <property type="match status" value="1"/>
</dbReference>
<dbReference type="PANTHER" id="PTHR21085:SF0">
    <property type="entry name" value="CHORISMATE SYNTHASE"/>
    <property type="match status" value="1"/>
</dbReference>
<dbReference type="Pfam" id="PF01264">
    <property type="entry name" value="Chorismate_synt"/>
    <property type="match status" value="1"/>
</dbReference>
<dbReference type="PIRSF" id="PIRSF001456">
    <property type="entry name" value="Chorismate_synth"/>
    <property type="match status" value="1"/>
</dbReference>
<dbReference type="SUPFAM" id="SSF103263">
    <property type="entry name" value="Chorismate synthase, AroC"/>
    <property type="match status" value="1"/>
</dbReference>
<dbReference type="PROSITE" id="PS00787">
    <property type="entry name" value="CHORISMATE_SYNTHASE_1"/>
    <property type="match status" value="1"/>
</dbReference>
<dbReference type="PROSITE" id="PS00788">
    <property type="entry name" value="CHORISMATE_SYNTHASE_2"/>
    <property type="match status" value="1"/>
</dbReference>
<dbReference type="PROSITE" id="PS00789">
    <property type="entry name" value="CHORISMATE_SYNTHASE_3"/>
    <property type="match status" value="1"/>
</dbReference>
<accession>C3MXK6</accession>
<name>AROC_SACI4</name>
<evidence type="ECO:0000255" key="1">
    <source>
        <dbReference type="HAMAP-Rule" id="MF_00300"/>
    </source>
</evidence>
<protein>
    <recommendedName>
        <fullName evidence="1">Chorismate synthase</fullName>
        <shortName evidence="1">CS</shortName>
        <ecNumber evidence="1">4.2.3.5</ecNumber>
    </recommendedName>
    <alternativeName>
        <fullName evidence="1">5-enolpyruvylshikimate-3-phosphate phospholyase</fullName>
    </alternativeName>
</protein>
<feature type="chain" id="PRO_1000204962" description="Chorismate synthase">
    <location>
        <begin position="1"/>
        <end position="391"/>
    </location>
</feature>
<feature type="binding site" evidence="1">
    <location>
        <position position="48"/>
    </location>
    <ligand>
        <name>NADP(+)</name>
        <dbReference type="ChEBI" id="CHEBI:58349"/>
    </ligand>
</feature>
<feature type="binding site" evidence="1">
    <location>
        <begin position="126"/>
        <end position="128"/>
    </location>
    <ligand>
        <name>FMN</name>
        <dbReference type="ChEBI" id="CHEBI:58210"/>
    </ligand>
</feature>
<feature type="binding site" evidence="1">
    <location>
        <position position="286"/>
    </location>
    <ligand>
        <name>FMN</name>
        <dbReference type="ChEBI" id="CHEBI:58210"/>
    </ligand>
</feature>
<feature type="binding site" evidence="1">
    <location>
        <begin position="301"/>
        <end position="305"/>
    </location>
    <ligand>
        <name>FMN</name>
        <dbReference type="ChEBI" id="CHEBI:58210"/>
    </ligand>
</feature>
<feature type="binding site" evidence="1">
    <location>
        <position position="328"/>
    </location>
    <ligand>
        <name>FMN</name>
        <dbReference type="ChEBI" id="CHEBI:58210"/>
    </ligand>
</feature>
<keyword id="KW-0028">Amino-acid biosynthesis</keyword>
<keyword id="KW-0057">Aromatic amino acid biosynthesis</keyword>
<keyword id="KW-0274">FAD</keyword>
<keyword id="KW-0285">Flavoprotein</keyword>
<keyword id="KW-0288">FMN</keyword>
<keyword id="KW-0456">Lyase</keyword>
<keyword id="KW-0521">NADP</keyword>